<accession>B7UZL0</accession>
<keyword id="KW-0687">Ribonucleoprotein</keyword>
<keyword id="KW-0689">Ribosomal protein</keyword>
<sequence>MSATQNYGTGRRKTATARVFLRPGTGKISINNRGLDQFFGRETARMVVRQPLELTETVEKFDIFVTVVGGGVSGQAGAIRHGITRALIEYDETLRSSLRKAGYVTRDAREVERKKVGLRKARKRPQYSKR</sequence>
<comment type="similarity">
    <text evidence="1">Belongs to the universal ribosomal protein uS9 family.</text>
</comment>
<proteinExistence type="inferred from homology"/>
<gene>
    <name evidence="1" type="primary">rpsI</name>
    <name type="ordered locus">PLES_48111</name>
</gene>
<name>RS9_PSEA8</name>
<organism>
    <name type="scientific">Pseudomonas aeruginosa (strain LESB58)</name>
    <dbReference type="NCBI Taxonomy" id="557722"/>
    <lineage>
        <taxon>Bacteria</taxon>
        <taxon>Pseudomonadati</taxon>
        <taxon>Pseudomonadota</taxon>
        <taxon>Gammaproteobacteria</taxon>
        <taxon>Pseudomonadales</taxon>
        <taxon>Pseudomonadaceae</taxon>
        <taxon>Pseudomonas</taxon>
    </lineage>
</organism>
<reference key="1">
    <citation type="journal article" date="2009" name="Genome Res.">
        <title>Newly introduced genomic prophage islands are critical determinants of in vivo competitiveness in the Liverpool epidemic strain of Pseudomonas aeruginosa.</title>
        <authorList>
            <person name="Winstanley C."/>
            <person name="Langille M.G.I."/>
            <person name="Fothergill J.L."/>
            <person name="Kukavica-Ibrulj I."/>
            <person name="Paradis-Bleau C."/>
            <person name="Sanschagrin F."/>
            <person name="Thomson N.R."/>
            <person name="Winsor G.L."/>
            <person name="Quail M.A."/>
            <person name="Lennard N."/>
            <person name="Bignell A."/>
            <person name="Clarke L."/>
            <person name="Seeger K."/>
            <person name="Saunders D."/>
            <person name="Harris D."/>
            <person name="Parkhill J."/>
            <person name="Hancock R.E.W."/>
            <person name="Brinkman F.S.L."/>
            <person name="Levesque R.C."/>
        </authorList>
    </citation>
    <scope>NUCLEOTIDE SEQUENCE [LARGE SCALE GENOMIC DNA]</scope>
    <source>
        <strain>LESB58</strain>
    </source>
</reference>
<evidence type="ECO:0000255" key="1">
    <source>
        <dbReference type="HAMAP-Rule" id="MF_00532"/>
    </source>
</evidence>
<evidence type="ECO:0000305" key="2"/>
<feature type="chain" id="PRO_1000128155" description="Small ribosomal subunit protein uS9">
    <location>
        <begin position="1"/>
        <end position="130"/>
    </location>
</feature>
<protein>
    <recommendedName>
        <fullName evidence="1">Small ribosomal subunit protein uS9</fullName>
    </recommendedName>
    <alternativeName>
        <fullName evidence="2">30S ribosomal protein S9</fullName>
    </alternativeName>
</protein>
<dbReference type="EMBL" id="FM209186">
    <property type="protein sequence ID" value="CAW29565.1"/>
    <property type="molecule type" value="Genomic_DNA"/>
</dbReference>
<dbReference type="RefSeq" id="WP_003098810.1">
    <property type="nucleotide sequence ID" value="NC_011770.1"/>
</dbReference>
<dbReference type="SMR" id="B7UZL0"/>
<dbReference type="KEGG" id="pag:PLES_48111"/>
<dbReference type="HOGENOM" id="CLU_046483_2_1_6"/>
<dbReference type="GO" id="GO:0022627">
    <property type="term" value="C:cytosolic small ribosomal subunit"/>
    <property type="evidence" value="ECO:0007669"/>
    <property type="project" value="TreeGrafter"/>
</dbReference>
<dbReference type="GO" id="GO:0003723">
    <property type="term" value="F:RNA binding"/>
    <property type="evidence" value="ECO:0007669"/>
    <property type="project" value="TreeGrafter"/>
</dbReference>
<dbReference type="GO" id="GO:0003735">
    <property type="term" value="F:structural constituent of ribosome"/>
    <property type="evidence" value="ECO:0007669"/>
    <property type="project" value="InterPro"/>
</dbReference>
<dbReference type="GO" id="GO:0006412">
    <property type="term" value="P:translation"/>
    <property type="evidence" value="ECO:0007669"/>
    <property type="project" value="UniProtKB-UniRule"/>
</dbReference>
<dbReference type="FunFam" id="3.30.230.10:FF:000001">
    <property type="entry name" value="30S ribosomal protein S9"/>
    <property type="match status" value="1"/>
</dbReference>
<dbReference type="Gene3D" id="3.30.230.10">
    <property type="match status" value="1"/>
</dbReference>
<dbReference type="HAMAP" id="MF_00532_B">
    <property type="entry name" value="Ribosomal_uS9_B"/>
    <property type="match status" value="1"/>
</dbReference>
<dbReference type="InterPro" id="IPR020568">
    <property type="entry name" value="Ribosomal_Su5_D2-typ_SF"/>
</dbReference>
<dbReference type="InterPro" id="IPR000754">
    <property type="entry name" value="Ribosomal_uS9"/>
</dbReference>
<dbReference type="InterPro" id="IPR023035">
    <property type="entry name" value="Ribosomal_uS9_bac/plastid"/>
</dbReference>
<dbReference type="InterPro" id="IPR020574">
    <property type="entry name" value="Ribosomal_uS9_CS"/>
</dbReference>
<dbReference type="InterPro" id="IPR014721">
    <property type="entry name" value="Ribsml_uS5_D2-typ_fold_subgr"/>
</dbReference>
<dbReference type="NCBIfam" id="NF001099">
    <property type="entry name" value="PRK00132.1"/>
    <property type="match status" value="1"/>
</dbReference>
<dbReference type="PANTHER" id="PTHR21569">
    <property type="entry name" value="RIBOSOMAL PROTEIN S9"/>
    <property type="match status" value="1"/>
</dbReference>
<dbReference type="PANTHER" id="PTHR21569:SF1">
    <property type="entry name" value="SMALL RIBOSOMAL SUBUNIT PROTEIN US9M"/>
    <property type="match status" value="1"/>
</dbReference>
<dbReference type="Pfam" id="PF00380">
    <property type="entry name" value="Ribosomal_S9"/>
    <property type="match status" value="1"/>
</dbReference>
<dbReference type="SUPFAM" id="SSF54211">
    <property type="entry name" value="Ribosomal protein S5 domain 2-like"/>
    <property type="match status" value="1"/>
</dbReference>
<dbReference type="PROSITE" id="PS00360">
    <property type="entry name" value="RIBOSOMAL_S9"/>
    <property type="match status" value="1"/>
</dbReference>